<sequence length="604" mass="68057">MFSSLMLVSLLVLTLPIMLSIFNTYKNSTFPHHVKNTISYAFITSLIPTMMFIHSGQETIISNWHWMTMQTLKLSLSFKLDYFSMIFVPVALFVTWSIMEFSLWYMHSDPYITRFFKYLLTFLITMMILVTANNLFQLFIGWEGVGIMSFLLIGWWYGRTDANTAALQAILYNRIGDIGFIMAMAWFLFNTNTWDLQQIFMLDPNLTNLPLLGLLLAATGKSAQFGLHPWLPSAMEGPTPVSALLHSSTMVVAGVFLLIRFHPLMENNKTIQSLTLCLGAITTLFTAICALTQNDIKKIIAFSTSSQLGLMIVTIGINQPYLAFLHICTHAFFKAMLFMCSGSIIHSLNDEQDIRKMGGLFNAMPFTTTSLIIGSLALTGIPFLTGFYSKDLIIETANTSYTNAWALLMTLIATSLTAVYSTRIIFFALLGQPRFLPLTSINENNPFLINSIKRLLIGSIFAGFFISNNIYPTTVPEMTMPTYMKLTALAVTILGFTLALELSLMTHNLKLEHSTNVFKFSNLLGYYPTIMHRLPPLANLSMSQKSASLLLDSIWLENILPKSISQFQMKTSILISTQKGQIKLYFLSFLITLTLSMLLFNLHE</sequence>
<name>NU5M_HORSE</name>
<evidence type="ECO:0000250" key="1">
    <source>
        <dbReference type="UniProtKB" id="P03915"/>
    </source>
</evidence>
<evidence type="ECO:0000250" key="2">
    <source>
        <dbReference type="UniProtKB" id="P03920"/>
    </source>
</evidence>
<evidence type="ECO:0000255" key="3"/>
<evidence type="ECO:0000305" key="4"/>
<evidence type="ECO:0000312" key="5">
    <source>
        <dbReference type="Proteomes" id="UP000002281"/>
    </source>
</evidence>
<keyword id="KW-0249">Electron transport</keyword>
<keyword id="KW-0472">Membrane</keyword>
<keyword id="KW-0496">Mitochondrion</keyword>
<keyword id="KW-0999">Mitochondrion inner membrane</keyword>
<keyword id="KW-0520">NAD</keyword>
<keyword id="KW-1185">Reference proteome</keyword>
<keyword id="KW-0679">Respiratory chain</keyword>
<keyword id="KW-1278">Translocase</keyword>
<keyword id="KW-0812">Transmembrane</keyword>
<keyword id="KW-1133">Transmembrane helix</keyword>
<keyword id="KW-0813">Transport</keyword>
<keyword id="KW-0830">Ubiquinone</keyword>
<geneLocation type="mitochondrion"/>
<reference key="1">
    <citation type="journal article" date="1994" name="Gene">
        <title>The complete mitochondrial DNA sequence of the horse, Equus caballus: extensive heteroplasmy of the control region.</title>
        <authorList>
            <person name="Xu X."/>
            <person name="Arnason U."/>
        </authorList>
    </citation>
    <scope>NUCLEOTIDE SEQUENCE [LARGE SCALE GENOMIC DNA]</scope>
    <source>
        <strain evidence="5">Thoroughbred</strain>
    </source>
</reference>
<comment type="function">
    <text evidence="1">Core subunit of the mitochondrial membrane respiratory chain NADH dehydrogenase (Complex I) which catalyzes electron transfer from NADH through the respiratory chain, using ubiquinone as an electron acceptor. Essential for the catalytic activity and assembly of complex I.</text>
</comment>
<comment type="catalytic activity">
    <reaction evidence="1">
        <text>a ubiquinone + NADH + 5 H(+)(in) = a ubiquinol + NAD(+) + 4 H(+)(out)</text>
        <dbReference type="Rhea" id="RHEA:29091"/>
        <dbReference type="Rhea" id="RHEA-COMP:9565"/>
        <dbReference type="Rhea" id="RHEA-COMP:9566"/>
        <dbReference type="ChEBI" id="CHEBI:15378"/>
        <dbReference type="ChEBI" id="CHEBI:16389"/>
        <dbReference type="ChEBI" id="CHEBI:17976"/>
        <dbReference type="ChEBI" id="CHEBI:57540"/>
        <dbReference type="ChEBI" id="CHEBI:57945"/>
        <dbReference type="EC" id="7.1.1.2"/>
    </reaction>
</comment>
<comment type="subunit">
    <text evidence="2">Core subunit of respiratory chain NADH dehydrogenase (Complex I) which is composed of 45 different subunits.</text>
</comment>
<comment type="subcellular location">
    <subcellularLocation>
        <location evidence="2">Mitochondrion inner membrane</location>
        <topology evidence="3">Multi-pass membrane protein</topology>
    </subcellularLocation>
</comment>
<comment type="similarity">
    <text evidence="4">Belongs to the complex I subunit 5 family.</text>
</comment>
<accession>P48656</accession>
<proteinExistence type="inferred from homology"/>
<feature type="chain" id="PRO_0000118100" description="NADH-ubiquinone oxidoreductase chain 5">
    <location>
        <begin position="1"/>
        <end position="604"/>
    </location>
</feature>
<feature type="transmembrane region" description="Helical" evidence="3">
    <location>
        <begin position="2"/>
        <end position="22"/>
    </location>
</feature>
<feature type="transmembrane region" description="Helical" evidence="3">
    <location>
        <begin position="41"/>
        <end position="61"/>
    </location>
</feature>
<feature type="transmembrane region" description="Helical" evidence="3">
    <location>
        <begin position="85"/>
        <end position="105"/>
    </location>
</feature>
<feature type="transmembrane region" description="Helical" evidence="3">
    <location>
        <begin position="115"/>
        <end position="135"/>
    </location>
</feature>
<feature type="transmembrane region" description="Helical" evidence="3">
    <location>
        <begin position="138"/>
        <end position="158"/>
    </location>
</feature>
<feature type="transmembrane region" description="Helical" evidence="3">
    <location>
        <begin position="169"/>
        <end position="189"/>
    </location>
</feature>
<feature type="transmembrane region" description="Helical" evidence="3">
    <location>
        <begin position="209"/>
        <end position="231"/>
    </location>
</feature>
<feature type="transmembrane region" description="Helical" evidence="3">
    <location>
        <begin position="239"/>
        <end position="259"/>
    </location>
</feature>
<feature type="transmembrane region" description="Helical" evidence="3">
    <location>
        <begin position="271"/>
        <end position="291"/>
    </location>
</feature>
<feature type="transmembrane region" description="Helical" evidence="3">
    <location>
        <begin position="299"/>
        <end position="318"/>
    </location>
</feature>
<feature type="transmembrane region" description="Helical" evidence="3">
    <location>
        <begin position="323"/>
        <end position="345"/>
    </location>
</feature>
<feature type="transmembrane region" description="Helical" evidence="3">
    <location>
        <begin position="364"/>
        <end position="384"/>
    </location>
</feature>
<feature type="transmembrane region" description="Helical" evidence="3">
    <location>
        <begin position="411"/>
        <end position="431"/>
    </location>
</feature>
<feature type="transmembrane region" description="Helical" evidence="3">
    <location>
        <begin position="455"/>
        <end position="475"/>
    </location>
</feature>
<feature type="transmembrane region" description="Helical" evidence="3">
    <location>
        <begin position="486"/>
        <end position="506"/>
    </location>
</feature>
<feature type="transmembrane region" description="Helical" evidence="3">
    <location>
        <begin position="582"/>
        <end position="602"/>
    </location>
</feature>
<organism>
    <name type="scientific">Equus caballus</name>
    <name type="common">Horse</name>
    <dbReference type="NCBI Taxonomy" id="9796"/>
    <lineage>
        <taxon>Eukaryota</taxon>
        <taxon>Metazoa</taxon>
        <taxon>Chordata</taxon>
        <taxon>Craniata</taxon>
        <taxon>Vertebrata</taxon>
        <taxon>Euteleostomi</taxon>
        <taxon>Mammalia</taxon>
        <taxon>Eutheria</taxon>
        <taxon>Laurasiatheria</taxon>
        <taxon>Perissodactyla</taxon>
        <taxon>Equidae</taxon>
        <taxon>Equus</taxon>
    </lineage>
</organism>
<dbReference type="EC" id="7.1.1.2" evidence="1"/>
<dbReference type="EMBL" id="X79547">
    <property type="protein sequence ID" value="CAA56089.1"/>
    <property type="molecule type" value="Genomic_DNA"/>
</dbReference>
<dbReference type="PIR" id="T11867">
    <property type="entry name" value="T11867"/>
</dbReference>
<dbReference type="RefSeq" id="NP_007170.1">
    <property type="nucleotide sequence ID" value="NC_001640.1"/>
</dbReference>
<dbReference type="SMR" id="P48656"/>
<dbReference type="FunCoup" id="P48656">
    <property type="interactions" value="155"/>
</dbReference>
<dbReference type="STRING" id="9796.ENSECAP00000023103"/>
<dbReference type="PaxDb" id="9796-ENSECAP00000023103"/>
<dbReference type="Ensembl" id="ENSECAT00000029862.1">
    <property type="protein sequence ID" value="ENSECAP00000023103.1"/>
    <property type="gene ID" value="ENSECAG00000027694.1"/>
</dbReference>
<dbReference type="KEGG" id="ecb:807853"/>
<dbReference type="VGNC" id="VGNC:59020">
    <property type="gene designation" value="MT-ND5"/>
</dbReference>
<dbReference type="GeneTree" id="ENSGT00730000111303"/>
<dbReference type="HOGENOM" id="CLU_007100_6_0_1"/>
<dbReference type="InParanoid" id="P48656"/>
<dbReference type="OMA" id="GVGIMSF"/>
<dbReference type="OrthoDB" id="10069788at2759"/>
<dbReference type="Proteomes" id="UP000002281">
    <property type="component" value="Mitochondrion"/>
</dbReference>
<dbReference type="Bgee" id="ENSECAG00000027694">
    <property type="expression patterns" value="Expressed in adult mammalian kidney and 23 other cell types or tissues"/>
</dbReference>
<dbReference type="ExpressionAtlas" id="P48656">
    <property type="expression patterns" value="baseline"/>
</dbReference>
<dbReference type="GO" id="GO:0005743">
    <property type="term" value="C:mitochondrial inner membrane"/>
    <property type="evidence" value="ECO:0000250"/>
    <property type="project" value="UniProtKB"/>
</dbReference>
<dbReference type="GO" id="GO:0045271">
    <property type="term" value="C:respiratory chain complex I"/>
    <property type="evidence" value="ECO:0000318"/>
    <property type="project" value="GO_Central"/>
</dbReference>
<dbReference type="GO" id="GO:0008137">
    <property type="term" value="F:NADH dehydrogenase (ubiquinone) activity"/>
    <property type="evidence" value="ECO:0000250"/>
    <property type="project" value="UniProtKB"/>
</dbReference>
<dbReference type="GO" id="GO:0015990">
    <property type="term" value="P:electron transport coupled proton transport"/>
    <property type="evidence" value="ECO:0000318"/>
    <property type="project" value="GO_Central"/>
</dbReference>
<dbReference type="GO" id="GO:0006120">
    <property type="term" value="P:mitochondrial electron transport, NADH to ubiquinone"/>
    <property type="evidence" value="ECO:0000250"/>
    <property type="project" value="UniProtKB"/>
</dbReference>
<dbReference type="GO" id="GO:0032981">
    <property type="term" value="P:mitochondrial respiratory chain complex I assembly"/>
    <property type="evidence" value="ECO:0000250"/>
    <property type="project" value="UniProtKB"/>
</dbReference>
<dbReference type="InterPro" id="IPR010934">
    <property type="entry name" value="NADH_DH_su5_C"/>
</dbReference>
<dbReference type="InterPro" id="IPR018393">
    <property type="entry name" value="NADHpl_OxRdtase_5_subgr"/>
</dbReference>
<dbReference type="InterPro" id="IPR001750">
    <property type="entry name" value="ND/Mrp_TM"/>
</dbReference>
<dbReference type="InterPro" id="IPR003945">
    <property type="entry name" value="NU5C-like"/>
</dbReference>
<dbReference type="InterPro" id="IPR001516">
    <property type="entry name" value="Proton_antipo_N"/>
</dbReference>
<dbReference type="NCBIfam" id="TIGR01974">
    <property type="entry name" value="NDH_I_L"/>
    <property type="match status" value="1"/>
</dbReference>
<dbReference type="PANTHER" id="PTHR42829">
    <property type="entry name" value="NADH-UBIQUINONE OXIDOREDUCTASE CHAIN 5"/>
    <property type="match status" value="1"/>
</dbReference>
<dbReference type="PANTHER" id="PTHR42829:SF2">
    <property type="entry name" value="NADH-UBIQUINONE OXIDOREDUCTASE CHAIN 5"/>
    <property type="match status" value="1"/>
</dbReference>
<dbReference type="Pfam" id="PF06455">
    <property type="entry name" value="NADH5_C"/>
    <property type="match status" value="1"/>
</dbReference>
<dbReference type="Pfam" id="PF00361">
    <property type="entry name" value="Proton_antipo_M"/>
    <property type="match status" value="1"/>
</dbReference>
<dbReference type="Pfam" id="PF00662">
    <property type="entry name" value="Proton_antipo_N"/>
    <property type="match status" value="1"/>
</dbReference>
<dbReference type="PRINTS" id="PR01434">
    <property type="entry name" value="NADHDHGNASE5"/>
</dbReference>
<gene>
    <name type="primary">MT-ND5</name>
    <name type="synonym">MTND5</name>
    <name type="synonym">NADH5</name>
    <name type="synonym">ND5</name>
</gene>
<protein>
    <recommendedName>
        <fullName>NADH-ubiquinone oxidoreductase chain 5</fullName>
        <ecNumber evidence="1">7.1.1.2</ecNumber>
    </recommendedName>
    <alternativeName>
        <fullName>NADH dehydrogenase subunit 5</fullName>
    </alternativeName>
</protein>